<protein>
    <recommendedName>
        <fullName evidence="1">L-ribulose-5-phosphate 3-epimerase UlaE</fullName>
        <ecNumber evidence="1">5.1.3.22</ecNumber>
    </recommendedName>
    <alternativeName>
        <fullName evidence="1">L-ascorbate utilization protein E</fullName>
    </alternativeName>
    <alternativeName>
        <fullName evidence="1">L-xylulose-5-phosphate 3-epimerase</fullName>
    </alternativeName>
</protein>
<proteinExistence type="inferred from homology"/>
<sequence>MLSKQIPLGIYEKALPAGECWLERLRLAKTLGFDFVEMSVDETDARLARLDWSREQRLALVSAVAETGVRVPSMCLSAHRRFPLGSEDDAVRAQGLEIMRKAIQFAQDVGIRVIQLAGYDVYYQQANDETRCRFRDGLKESVDMASRAQVTLAMEIMDYPLMNSISKALGYAHYLNNPWFQLYPDIGNLSAWDNDVQMELQAGSGHIVAVHVKDTKPGVFKNVPFGEGVVDFERCFETLKQSGYCGPYLIEMWSETAENPAAEVAKARDWVKARMAKAGMVEAA</sequence>
<dbReference type="EC" id="5.1.3.22" evidence="1"/>
<dbReference type="EMBL" id="FM200053">
    <property type="protein sequence ID" value="CAR62190.1"/>
    <property type="molecule type" value="Genomic_DNA"/>
</dbReference>
<dbReference type="RefSeq" id="WP_000949532.1">
    <property type="nucleotide sequence ID" value="NC_011147.1"/>
</dbReference>
<dbReference type="SMR" id="B5BKK5"/>
<dbReference type="KEGG" id="sek:SSPA3904"/>
<dbReference type="HOGENOM" id="CLU_082738_0_0_6"/>
<dbReference type="UniPathway" id="UPA00263">
    <property type="reaction ID" value="UER00379"/>
</dbReference>
<dbReference type="Proteomes" id="UP000001869">
    <property type="component" value="Chromosome"/>
</dbReference>
<dbReference type="GO" id="GO:0016861">
    <property type="term" value="F:intramolecular oxidoreductase activity, interconverting aldoses and ketoses"/>
    <property type="evidence" value="ECO:0007669"/>
    <property type="project" value="InterPro"/>
</dbReference>
<dbReference type="GO" id="GO:0034015">
    <property type="term" value="F:L-ribulose-5-phosphate 3-epimerase activity"/>
    <property type="evidence" value="ECO:0007669"/>
    <property type="project" value="UniProtKB-UniRule"/>
</dbReference>
<dbReference type="GO" id="GO:0019854">
    <property type="term" value="P:L-ascorbic acid catabolic process"/>
    <property type="evidence" value="ECO:0007669"/>
    <property type="project" value="UniProtKB-UniRule"/>
</dbReference>
<dbReference type="FunFam" id="3.20.20.150:FF:000003">
    <property type="entry name" value="L-ribulose-5-phosphate 3-epimerase UlaE"/>
    <property type="match status" value="1"/>
</dbReference>
<dbReference type="Gene3D" id="3.20.20.150">
    <property type="entry name" value="Divalent-metal-dependent TIM barrel enzymes"/>
    <property type="match status" value="1"/>
</dbReference>
<dbReference type="HAMAP" id="MF_01951">
    <property type="entry name" value="UlaE"/>
    <property type="match status" value="1"/>
</dbReference>
<dbReference type="InterPro" id="IPR004560">
    <property type="entry name" value="L-Ru-5P_3-Epase"/>
</dbReference>
<dbReference type="InterPro" id="IPR023492">
    <property type="entry name" value="L-Ru-5P_3-Epase_Enterobacteria"/>
</dbReference>
<dbReference type="InterPro" id="IPR050417">
    <property type="entry name" value="Sugar_Epim/Isomerase"/>
</dbReference>
<dbReference type="InterPro" id="IPR036237">
    <property type="entry name" value="Xyl_isomerase-like_sf"/>
</dbReference>
<dbReference type="InterPro" id="IPR013022">
    <property type="entry name" value="Xyl_isomerase-like_TIM-brl"/>
</dbReference>
<dbReference type="NCBIfam" id="TIGR00542">
    <property type="entry name" value="hxl6Piso_put"/>
    <property type="match status" value="1"/>
</dbReference>
<dbReference type="NCBIfam" id="NF009688">
    <property type="entry name" value="PRK13209.1"/>
    <property type="match status" value="1"/>
</dbReference>
<dbReference type="NCBIfam" id="NF009689">
    <property type="entry name" value="PRK13210.1"/>
    <property type="match status" value="1"/>
</dbReference>
<dbReference type="PANTHER" id="PTHR43489">
    <property type="entry name" value="ISOMERASE"/>
    <property type="match status" value="1"/>
</dbReference>
<dbReference type="PANTHER" id="PTHR43489:SF8">
    <property type="entry name" value="L-RIBULOSE-5-PHOSPHATE 3-EPIMERASE ULAE"/>
    <property type="match status" value="1"/>
</dbReference>
<dbReference type="Pfam" id="PF01261">
    <property type="entry name" value="AP_endonuc_2"/>
    <property type="match status" value="1"/>
</dbReference>
<dbReference type="SUPFAM" id="SSF51658">
    <property type="entry name" value="Xylose isomerase-like"/>
    <property type="match status" value="1"/>
</dbReference>
<accession>B5BKK5</accession>
<organism>
    <name type="scientific">Salmonella paratyphi A (strain AKU_12601)</name>
    <dbReference type="NCBI Taxonomy" id="554290"/>
    <lineage>
        <taxon>Bacteria</taxon>
        <taxon>Pseudomonadati</taxon>
        <taxon>Pseudomonadota</taxon>
        <taxon>Gammaproteobacteria</taxon>
        <taxon>Enterobacterales</taxon>
        <taxon>Enterobacteriaceae</taxon>
        <taxon>Salmonella</taxon>
    </lineage>
</organism>
<name>ULAE_SALPK</name>
<evidence type="ECO:0000255" key="1">
    <source>
        <dbReference type="HAMAP-Rule" id="MF_01951"/>
    </source>
</evidence>
<reference key="1">
    <citation type="journal article" date="2009" name="BMC Genomics">
        <title>Pseudogene accumulation in the evolutionary histories of Salmonella enterica serovars Paratyphi A and Typhi.</title>
        <authorList>
            <person name="Holt K.E."/>
            <person name="Thomson N.R."/>
            <person name="Wain J."/>
            <person name="Langridge G.C."/>
            <person name="Hasan R."/>
            <person name="Bhutta Z.A."/>
            <person name="Quail M.A."/>
            <person name="Norbertczak H."/>
            <person name="Walker D."/>
            <person name="Simmonds M."/>
            <person name="White B."/>
            <person name="Bason N."/>
            <person name="Mungall K."/>
            <person name="Dougan G."/>
            <person name="Parkhill J."/>
        </authorList>
    </citation>
    <scope>NUCLEOTIDE SEQUENCE [LARGE SCALE GENOMIC DNA]</scope>
    <source>
        <strain>AKU_12601</strain>
    </source>
</reference>
<keyword id="KW-0413">Isomerase</keyword>
<feature type="chain" id="PRO_1000188837" description="L-ribulose-5-phosphate 3-epimerase UlaE">
    <location>
        <begin position="1"/>
        <end position="284"/>
    </location>
</feature>
<comment type="function">
    <text evidence="1">Catalyzes the isomerization of L-xylulose-5-phosphate to L-ribulose-5-phosphate. Is involved in the anaerobic L-ascorbate utilization.</text>
</comment>
<comment type="catalytic activity">
    <reaction evidence="1">
        <text>L-ribulose 5-phosphate = L-xylulose 5-phosphate</text>
        <dbReference type="Rhea" id="RHEA:18497"/>
        <dbReference type="ChEBI" id="CHEBI:57829"/>
        <dbReference type="ChEBI" id="CHEBI:58226"/>
        <dbReference type="EC" id="5.1.3.22"/>
    </reaction>
</comment>
<comment type="pathway">
    <text evidence="1">Cofactor degradation; L-ascorbate degradation; D-xylulose 5-phosphate from L-ascorbate: step 3/4.</text>
</comment>
<comment type="induction">
    <text evidence="1">Induced by L-ascorbate. Repressed by UlaR.</text>
</comment>
<comment type="similarity">
    <text evidence="1">Belongs to the L-ribulose-5-phosphate 3-epimerase family.</text>
</comment>
<gene>
    <name evidence="1" type="primary">ulaE</name>
    <name type="ordered locus">SSPA3904</name>
</gene>